<keyword id="KW-0044">Antibiotic</keyword>
<keyword id="KW-0929">Antimicrobial</keyword>
<keyword id="KW-0903">Direct protein sequencing</keyword>
<keyword id="KW-1015">Disulfide bond</keyword>
<keyword id="KW-0391">Immunity</keyword>
<keyword id="KW-0399">Innate immunity</keyword>
<keyword id="KW-0646">Protease inhibitor</keyword>
<keyword id="KW-1185">Reference proteome</keyword>
<keyword id="KW-0677">Repeat</keyword>
<keyword id="KW-0964">Secreted</keyword>
<keyword id="KW-0722">Serine protease inhibitor</keyword>
<keyword id="KW-0732">Signal</keyword>
<reference key="1">
    <citation type="journal article" date="1997" name="Cell">
        <title>Secretory leukocyte protease inhibitor: a macrophage product induced by and antagonistic to bacterial lipopolysaccharide.</title>
        <authorList>
            <person name="Jin F.-Y."/>
            <person name="Nathan C.F."/>
            <person name="Radzioch D."/>
            <person name="Ding A."/>
        </authorList>
    </citation>
    <scope>NUCLEOTIDE SEQUENCE [MRNA]</scope>
    <scope>FUNCTION</scope>
    <scope>INDUCTION BY BACTERIAL LIPOPOLYSACCHARIDE</scope>
    <scope>TISSUE SPECIFICITY</scope>
</reference>
<reference key="2">
    <citation type="journal article" date="1997" name="Biochem. Biophys. Res. Commun.">
        <title>The cloning and characterization of a murine secretory leukocyte protease inhibitor cDNA.</title>
        <authorList>
            <person name="Zitnik R.J."/>
            <person name="Zhang J."/>
            <person name="Kashem M.A."/>
            <person name="Kohno T."/>
            <person name="Lyons D.E."/>
            <person name="Wright C.D."/>
            <person name="Rosen E."/>
            <person name="Goldberg I."/>
            <person name="Hayday A.C."/>
        </authorList>
    </citation>
    <scope>NUCLEOTIDE SEQUENCE [MRNA]</scope>
    <scope>PROTEIN SEQUENCE OF 26-51</scope>
    <scope>FUNCTION</scope>
    <scope>SUBCELLULAR LOCATION</scope>
    <scope>TISSUE SPECIFICITY</scope>
</reference>
<reference key="3">
    <citation type="journal article" date="1997" name="Am. J. Respir. Crit. Care Med.">
        <title>Bacterial pneumonia causes augmented expression of the secretory leukoprotease inhibitor gene in the murine lung.</title>
        <authorList>
            <person name="Abe T."/>
            <person name="Tominaga Y."/>
            <person name="Kikuchi T."/>
            <person name="Watanabe A."/>
            <person name="Satoh K."/>
            <person name="Watanabe Y."/>
            <person name="Nukiwa T."/>
        </authorList>
    </citation>
    <scope>NUCLEOTIDE SEQUENCE [MRNA]</scope>
    <scope>TISSUE SPECIFICITY</scope>
    <scope>INDUCTION BY PNEUMONIA</scope>
    <source>
        <strain>C57BL/6 X CBA</strain>
        <tissue>Lung</tissue>
    </source>
</reference>
<reference key="4">
    <citation type="journal article" date="2004" name="Genome Res.">
        <title>The status, quality, and expansion of the NIH full-length cDNA project: the Mammalian Gene Collection (MGC).</title>
        <authorList>
            <consortium name="The MGC Project Team"/>
        </authorList>
    </citation>
    <scope>NUCLEOTIDE SEQUENCE [LARGE SCALE MRNA]</scope>
    <source>
        <tissue>Mammary gland</tissue>
    </source>
</reference>
<reference key="5">
    <citation type="journal article" date="2000" name="Nat. Med.">
        <title>Secretory leukocyte protease inhibitor mediates non-redundant functions necessary for normal wound healing.</title>
        <authorList>
            <person name="Ashcroft G.S."/>
            <person name="Lei K."/>
            <person name="Jin W."/>
            <person name="Longenecker G."/>
            <person name="Kulkarni A.B."/>
            <person name="Greenwell-Wild T."/>
            <person name="Hale-Donze H."/>
            <person name="McGrady G."/>
            <person name="Song X.Y."/>
            <person name="Wahl S.M."/>
        </authorList>
    </citation>
    <scope>DISRUPTION PHENOTYPE</scope>
    <scope>FUNCTION</scope>
    <scope>INDUCTION BY WOUNDING</scope>
</reference>
<reference key="6">
    <citation type="journal article" date="2002" name="Cell">
        <title>Conversion of proepithelin to epithelins: roles of SLPI and elastase in host defense and wound repair.</title>
        <authorList>
            <person name="Zhu J."/>
            <person name="Nathan C."/>
            <person name="Jin W."/>
            <person name="Sim D."/>
            <person name="Ashcroft G.S."/>
            <person name="Wahl S.M."/>
            <person name="Lacomis L."/>
            <person name="Erdjument-Bromage H."/>
            <person name="Tempst P."/>
            <person name="Wright C.D."/>
            <person name="Ding A."/>
        </authorList>
    </citation>
    <scope>INTERACTION WITH GRN</scope>
</reference>
<reference key="7">
    <citation type="journal article" date="2003" name="J. Exp. Med.">
        <title>Increased susceptibility to LPS-induced endotoxin shock in secretory leukoprotease inhibitor (SLPI)-deficient mice.</title>
        <authorList>
            <person name="Nakamura A."/>
            <person name="Mori Y."/>
            <person name="Hagiwara K."/>
            <person name="Suzuki T."/>
            <person name="Sakakibara T."/>
            <person name="Kikuchi T."/>
            <person name="Igarashi T."/>
            <person name="Ebina M."/>
            <person name="Abe T."/>
            <person name="Miyazaki J."/>
            <person name="Takai T."/>
            <person name="Nukiwa T."/>
        </authorList>
    </citation>
    <scope>DISRUPTION PHENOTYPE</scope>
    <scope>FUNCTION</scope>
</reference>
<reference key="8">
    <citation type="journal article" date="2008" name="J. Immunol.">
        <title>Potent antimycobacterial activity of mouse secretory leukocyte protease inhibitor.</title>
        <authorList>
            <person name="Nishimura J."/>
            <person name="Saiga H."/>
            <person name="Sato S."/>
            <person name="Okuyama M."/>
            <person name="Kayama H."/>
            <person name="Kuwata H."/>
            <person name="Matsumoto S."/>
            <person name="Nishida T."/>
            <person name="Sawa Y."/>
            <person name="Akira S."/>
            <person name="Yoshikai Y."/>
            <person name="Yamamoto M."/>
            <person name="Takeda K."/>
        </authorList>
    </citation>
    <scope>DISRUPTION PHENOTYPE</scope>
    <scope>FUNCTION</scope>
    <scope>TISSUE SPECIFICITY</scope>
    <scope>SUBCELLULAR LOCATION</scope>
    <scope>MUTAGENESIS OF 39-LYS-LYS-40; LYS-92 AND ARG-96</scope>
</reference>
<reference key="9">
    <citation type="journal article" date="2014" name="J. Leukoc. Biol.">
        <title>Aberrant host defense against Leishmania major in the absence of SLPI.</title>
        <authorList>
            <person name="McCartney-Francis N."/>
            <person name="Jin W."/>
            <person name="Belkaid Y."/>
            <person name="McGrady G."/>
            <person name="Wahl S.M."/>
        </authorList>
    </citation>
    <scope>DISRUPTION PHENOTYPE</scope>
    <scope>FUNCTION</scope>
    <scope>INDUCTION</scope>
</reference>
<organism>
    <name type="scientific">Mus musculus</name>
    <name type="common">Mouse</name>
    <dbReference type="NCBI Taxonomy" id="10090"/>
    <lineage>
        <taxon>Eukaryota</taxon>
        <taxon>Metazoa</taxon>
        <taxon>Chordata</taxon>
        <taxon>Craniata</taxon>
        <taxon>Vertebrata</taxon>
        <taxon>Euteleostomi</taxon>
        <taxon>Mammalia</taxon>
        <taxon>Eutheria</taxon>
        <taxon>Euarchontoglires</taxon>
        <taxon>Glires</taxon>
        <taxon>Rodentia</taxon>
        <taxon>Myomorpha</taxon>
        <taxon>Muroidea</taxon>
        <taxon>Muridae</taxon>
        <taxon>Murinae</taxon>
        <taxon>Mus</taxon>
        <taxon>Mus</taxon>
    </lineage>
</organism>
<sequence>MKSCGLLPFTVLLALGILAPWTVEGGKNDAIKIGACPAKKPAQCLKLEKPQCRTDWECPGKQRCCQDACGSKCVNPVPIRKPVWRKPGRCVKTQARCMMLNPPNVCQRDGQCDGKYKCCEGICGKVCLPPM</sequence>
<comment type="function">
    <text evidence="1 3 5 6 7 8 9 10 12">Acid-stable proteinase inhibitor with strong affinities for trypsin, chymotrypsin, elastase, and cathepsin G (PubMed:9126337). Modulates the innate immune response after bacterial infection (PubMed:12615907). Contributes to regulate the inflammatory and immune responses to the intracellular parasite L.major (PubMed:25030421). Down-regulates responses to bacterial lipopolysaccharide (LPS) (PubMed:12615907, PubMed:25030421, PubMed:9039268). Plays a role in regulating the activation of NF-kappa-B and inflammatory responses (PubMed:11017147, PubMed:12615907). Has antimicrobial activity against mycobacteria, but not against salmonella (PubMed:18322212). Contributes to normal resistance against infection by M.tuberculosis (PubMed:18322212). Required for normal resistance to L.major (PubMed:25030421). Required for normal wound healing, probably by preventing tissue damage by limiting protease activity (PubMed:11017147, PubMed:25030421). Together with ELANE, required for normal differentiation and proliferation of bone marrow myeloid cells (By similarity).</text>
</comment>
<comment type="subunit">
    <text evidence="4">Interacts with GRN; interaction protects progranulin from proteolysis.</text>
</comment>
<comment type="subcellular location">
    <subcellularLocation>
        <location evidence="6 9">Secreted</location>
    </subcellularLocation>
</comment>
<comment type="tissue specificity">
    <text evidence="6 8 9 10">Detected in bronchial epithelial cells (PubMed:18322212). Detected in bronchoalveolar fluid after infection with M.tuberculosis (at protein level) (PubMed:18322212). Highest expression in lung, spleen, intestine and epididymis with lower levels in liver and seminal vesicle. No expression in brain, heart, kidney and muscle.</text>
</comment>
<comment type="induction">
    <text evidence="3 6 7 8 10">Up-regulated by bacterial lipopolysaccharide (PubMed:25030421, PubMed:9039268). Up-regulated in lung after infection with M.tuberculosis (PubMed:18322212). Down-regulated by IFNG (PubMed:9039268). Up-regulated in lung in response to bacterial pneumonia (PubMed:9351627). Up-regulated in macrophages after exposure to L.major (PubMed:25030421). Not up-regulated in spleen in response to bacterial pneumonia (PubMed:9351627). Up-regulated in wounded skin (PubMed:11017147).</text>
</comment>
<comment type="disruption phenotype">
    <text evidence="3 5 6 7">Mutant mice show delayed epithelial wound healing and an increased inflammatory response at the site of wounding, possibly due to increased elastase activity (PubMed:11017147, PubMed:25030421). Mutant mice show an increased tendency to die from toxic shock after exposure to bacterial lipopolysaccharide (LPS) (PubMed:12615907). Mutant mice are highly susceptible to M.tuberculosis; all die within 50 days after infection (PubMed:18322212). Mutant mice are highly susceptible infection by L.major. Contrary to what is observed with wild-type, the parasites are not restricted to the initial site of infection, but spread to spleen, liver and bone morrow. The skin lesions at the initial site of infection do not heal normally, but become bigger over time, in parallel with the spread of the parasites. The inflammatory response at the site of infection is more intense and persists longer than normal. Increased protease activity is observed in these lesions and may be the cause of the extensive tissue damage and necrosis (PubMed:25030421).</text>
</comment>
<name>SLPI_MOUSE</name>
<proteinExistence type="evidence at protein level"/>
<evidence type="ECO:0000250" key="1">
    <source>
        <dbReference type="UniProtKB" id="P03973"/>
    </source>
</evidence>
<evidence type="ECO:0000255" key="2">
    <source>
        <dbReference type="PROSITE-ProRule" id="PRU00722"/>
    </source>
</evidence>
<evidence type="ECO:0000269" key="3">
    <source>
    </source>
</evidence>
<evidence type="ECO:0000269" key="4">
    <source>
    </source>
</evidence>
<evidence type="ECO:0000269" key="5">
    <source>
    </source>
</evidence>
<evidence type="ECO:0000269" key="6">
    <source>
    </source>
</evidence>
<evidence type="ECO:0000269" key="7">
    <source>
    </source>
</evidence>
<evidence type="ECO:0000269" key="8">
    <source>
    </source>
</evidence>
<evidence type="ECO:0000269" key="9">
    <source>
    </source>
</evidence>
<evidence type="ECO:0000269" key="10">
    <source>
    </source>
</evidence>
<evidence type="ECO:0000303" key="11">
    <source>
    </source>
</evidence>
<evidence type="ECO:0000305" key="12"/>
<dbReference type="EMBL" id="U73004">
    <property type="protein sequence ID" value="AAC53047.1"/>
    <property type="molecule type" value="mRNA"/>
</dbReference>
<dbReference type="EMBL" id="U88093">
    <property type="protein sequence ID" value="AAC53140.1"/>
    <property type="molecule type" value="mRNA"/>
</dbReference>
<dbReference type="EMBL" id="U94341">
    <property type="protein sequence ID" value="AAC53394.1"/>
    <property type="molecule type" value="mRNA"/>
</dbReference>
<dbReference type="EMBL" id="BC028509">
    <property type="protein sequence ID" value="AAH28509.1"/>
    <property type="molecule type" value="mRNA"/>
</dbReference>
<dbReference type="CCDS" id="CCDS17033.1"/>
<dbReference type="RefSeq" id="NP_001399530.1">
    <property type="nucleotide sequence ID" value="NM_001412601.1"/>
</dbReference>
<dbReference type="RefSeq" id="NP_001399531.1">
    <property type="nucleotide sequence ID" value="NM_001412602.1"/>
</dbReference>
<dbReference type="RefSeq" id="NP_035544.1">
    <property type="nucleotide sequence ID" value="NM_011414.4"/>
</dbReference>
<dbReference type="SMR" id="P97430"/>
<dbReference type="BioGRID" id="203333">
    <property type="interactions" value="1"/>
</dbReference>
<dbReference type="CORUM" id="P97430"/>
<dbReference type="FunCoup" id="P97430">
    <property type="interactions" value="66"/>
</dbReference>
<dbReference type="STRING" id="10090.ENSMUSP00000104992"/>
<dbReference type="MEROPS" id="I17.001"/>
<dbReference type="PhosphoSitePlus" id="P97430"/>
<dbReference type="PaxDb" id="10090-ENSMUSP00000104992"/>
<dbReference type="ProteomicsDB" id="261195"/>
<dbReference type="Antibodypedia" id="3705">
    <property type="antibodies" value="433 antibodies from 36 providers"/>
</dbReference>
<dbReference type="DNASU" id="20568"/>
<dbReference type="Ensembl" id="ENSMUST00000109367.10">
    <property type="protein sequence ID" value="ENSMUSP00000104992.4"/>
    <property type="gene ID" value="ENSMUSG00000017002.15"/>
</dbReference>
<dbReference type="GeneID" id="20568"/>
<dbReference type="KEGG" id="mmu:20568"/>
<dbReference type="UCSC" id="uc008nuj.1">
    <property type="organism name" value="mouse"/>
</dbReference>
<dbReference type="AGR" id="MGI:109297"/>
<dbReference type="CTD" id="6590"/>
<dbReference type="MGI" id="MGI:109297">
    <property type="gene designation" value="Slpi"/>
</dbReference>
<dbReference type="VEuPathDB" id="HostDB:ENSMUSG00000017002"/>
<dbReference type="eggNOG" id="ENOG502SWIR">
    <property type="taxonomic scope" value="Eukaryota"/>
</dbReference>
<dbReference type="GeneTree" id="ENSGT00730000111217"/>
<dbReference type="HOGENOM" id="CLU_105901_2_1_1"/>
<dbReference type="InParanoid" id="P97430"/>
<dbReference type="OMA" id="NLKCCKG"/>
<dbReference type="OrthoDB" id="4473401at2759"/>
<dbReference type="PhylomeDB" id="P97430"/>
<dbReference type="TreeFam" id="TF338375"/>
<dbReference type="Reactome" id="R-MMU-6798695">
    <property type="pathway name" value="Neutrophil degranulation"/>
</dbReference>
<dbReference type="BioGRID-ORCS" id="20568">
    <property type="hits" value="1 hit in 77 CRISPR screens"/>
</dbReference>
<dbReference type="PRO" id="PR:P97430"/>
<dbReference type="Proteomes" id="UP000000589">
    <property type="component" value="Chromosome 2"/>
</dbReference>
<dbReference type="RNAct" id="P97430">
    <property type="molecule type" value="protein"/>
</dbReference>
<dbReference type="Bgee" id="ENSMUSG00000017002">
    <property type="expression patterns" value="Expressed in esophagus and 129 other cell types or tissues"/>
</dbReference>
<dbReference type="ExpressionAtlas" id="P97430">
    <property type="expression patterns" value="baseline and differential"/>
</dbReference>
<dbReference type="GO" id="GO:0005615">
    <property type="term" value="C:extracellular space"/>
    <property type="evidence" value="ECO:0000314"/>
    <property type="project" value="UniProtKB"/>
</dbReference>
<dbReference type="GO" id="GO:0005794">
    <property type="term" value="C:Golgi apparatus"/>
    <property type="evidence" value="ECO:0007669"/>
    <property type="project" value="Ensembl"/>
</dbReference>
<dbReference type="GO" id="GO:0003677">
    <property type="term" value="F:DNA binding"/>
    <property type="evidence" value="ECO:0007669"/>
    <property type="project" value="Ensembl"/>
</dbReference>
<dbReference type="GO" id="GO:0004866">
    <property type="term" value="F:endopeptidase inhibitor activity"/>
    <property type="evidence" value="ECO:0000314"/>
    <property type="project" value="UniProtKB"/>
</dbReference>
<dbReference type="GO" id="GO:0019899">
    <property type="term" value="F:enzyme binding"/>
    <property type="evidence" value="ECO:0007669"/>
    <property type="project" value="Ensembl"/>
</dbReference>
<dbReference type="GO" id="GO:0003729">
    <property type="term" value="F:mRNA binding"/>
    <property type="evidence" value="ECO:0007669"/>
    <property type="project" value="Ensembl"/>
</dbReference>
<dbReference type="GO" id="GO:0004867">
    <property type="term" value="F:serine-type endopeptidase inhibitor activity"/>
    <property type="evidence" value="ECO:0000250"/>
    <property type="project" value="UniProtKB"/>
</dbReference>
<dbReference type="GO" id="GO:0019731">
    <property type="term" value="P:antibacterial humoral response"/>
    <property type="evidence" value="ECO:0000315"/>
    <property type="project" value="UniProtKB"/>
</dbReference>
<dbReference type="GO" id="GO:0051851">
    <property type="term" value="P:host-mediated perturbation of symbiont process"/>
    <property type="evidence" value="ECO:0007669"/>
    <property type="project" value="Ensembl"/>
</dbReference>
<dbReference type="GO" id="GO:0006955">
    <property type="term" value="P:immune response"/>
    <property type="evidence" value="ECO:0000315"/>
    <property type="project" value="UniProtKB"/>
</dbReference>
<dbReference type="GO" id="GO:0045087">
    <property type="term" value="P:innate immune response"/>
    <property type="evidence" value="ECO:0000315"/>
    <property type="project" value="UniProtKB"/>
</dbReference>
<dbReference type="GO" id="GO:0045071">
    <property type="term" value="P:negative regulation of viral genome replication"/>
    <property type="evidence" value="ECO:0007669"/>
    <property type="project" value="Ensembl"/>
</dbReference>
<dbReference type="GO" id="GO:0032496">
    <property type="term" value="P:response to lipopolysaccharide"/>
    <property type="evidence" value="ECO:0000315"/>
    <property type="project" value="UniProtKB"/>
</dbReference>
<dbReference type="CDD" id="cd00199">
    <property type="entry name" value="WAP"/>
    <property type="match status" value="1"/>
</dbReference>
<dbReference type="FunFam" id="4.10.75.10:FF:000001">
    <property type="entry name" value="Anosmin 1"/>
    <property type="match status" value="2"/>
</dbReference>
<dbReference type="Gene3D" id="4.10.75.10">
    <property type="entry name" value="Elafin-like"/>
    <property type="match status" value="2"/>
</dbReference>
<dbReference type="InterPro" id="IPR036645">
    <property type="entry name" value="Elafin-like_sf"/>
</dbReference>
<dbReference type="InterPro" id="IPR008197">
    <property type="entry name" value="WAP_dom"/>
</dbReference>
<dbReference type="InterPro" id="IPR050514">
    <property type="entry name" value="WAP_four-disulfide_core"/>
</dbReference>
<dbReference type="PANTHER" id="PTHR19441:SF44">
    <property type="entry name" value="ANTILEUKOPROTEINASE"/>
    <property type="match status" value="1"/>
</dbReference>
<dbReference type="PANTHER" id="PTHR19441">
    <property type="entry name" value="WHEY ACDIC PROTEIN WAP"/>
    <property type="match status" value="1"/>
</dbReference>
<dbReference type="Pfam" id="PF00095">
    <property type="entry name" value="WAP"/>
    <property type="match status" value="2"/>
</dbReference>
<dbReference type="PRINTS" id="PR00003">
    <property type="entry name" value="4DISULPHCORE"/>
</dbReference>
<dbReference type="SMART" id="SM00217">
    <property type="entry name" value="WAP"/>
    <property type="match status" value="2"/>
</dbReference>
<dbReference type="SUPFAM" id="SSF57256">
    <property type="entry name" value="Elafin-like"/>
    <property type="match status" value="2"/>
</dbReference>
<dbReference type="PROSITE" id="PS51390">
    <property type="entry name" value="WAP"/>
    <property type="match status" value="2"/>
</dbReference>
<accession>P97430</accession>
<accession>O09081</accession>
<accession>O09082</accession>
<protein>
    <recommendedName>
        <fullName>Antileukoproteinase</fullName>
        <shortName>ALP</shortName>
    </recommendedName>
    <alternativeName>
        <fullName evidence="11">Secretory leukocyte protease inhibitor</fullName>
    </alternativeName>
</protein>
<feature type="signal peptide" evidence="9">
    <location>
        <begin position="1"/>
        <end position="25"/>
    </location>
</feature>
<feature type="chain" id="PRO_0000041356" description="Antileukoproteinase">
    <location>
        <begin position="26"/>
        <end position="131"/>
    </location>
</feature>
<feature type="domain" description="WAP 1" evidence="2">
    <location>
        <begin position="29"/>
        <end position="77"/>
    </location>
</feature>
<feature type="domain" description="WAP 2" evidence="2">
    <location>
        <begin position="83"/>
        <end position="131"/>
    </location>
</feature>
<feature type="region of interest" description="Elastase inhibitory domain">
    <location>
        <begin position="85"/>
        <end position="131"/>
    </location>
</feature>
<feature type="site" description="Reactive bond for chymotrypsin, trypsin and elastase" evidence="1">
    <location>
        <begin position="98"/>
        <end position="99"/>
    </location>
</feature>
<feature type="disulfide bond" evidence="2">
    <location>
        <begin position="36"/>
        <end position="65"/>
    </location>
</feature>
<feature type="disulfide bond" evidence="2">
    <location>
        <begin position="44"/>
        <end position="69"/>
    </location>
</feature>
<feature type="disulfide bond" evidence="2">
    <location>
        <begin position="52"/>
        <end position="64"/>
    </location>
</feature>
<feature type="disulfide bond" evidence="2">
    <location>
        <begin position="58"/>
        <end position="73"/>
    </location>
</feature>
<feature type="disulfide bond" evidence="2">
    <location>
        <begin position="90"/>
        <end position="119"/>
    </location>
</feature>
<feature type="disulfide bond" evidence="2">
    <location>
        <begin position="97"/>
        <end position="123"/>
    </location>
</feature>
<feature type="disulfide bond" evidence="2">
    <location>
        <begin position="106"/>
        <end position="118"/>
    </location>
</feature>
<feature type="disulfide bond" evidence="2">
    <location>
        <begin position="112"/>
        <end position="127"/>
    </location>
</feature>
<feature type="mutagenesis site" description="Loss of antimicrobial activity." evidence="6">
    <original>KK</original>
    <variation>DD</variation>
    <location>
        <begin position="39"/>
        <end position="40"/>
    </location>
</feature>
<feature type="mutagenesis site" description="Loss of antimicrobial activity; when associated with A-96." evidence="6">
    <original>K</original>
    <variation>D</variation>
    <location>
        <position position="92"/>
    </location>
</feature>
<feature type="mutagenesis site" description="Loss of antimicrobial activity; when associated with A-92." evidence="6">
    <original>R</original>
    <variation>D</variation>
    <location>
        <position position="96"/>
    </location>
</feature>
<gene>
    <name type="primary">Slpi</name>
</gene>